<accession>Q2NY21</accession>
<reference key="1">
    <citation type="journal article" date="2005" name="Jpn. Agric. Res. Q.">
        <title>Genome sequence of Xanthomonas oryzae pv. oryzae suggests contribution of large numbers of effector genes and insertion sequences to its race diversity.</title>
        <authorList>
            <person name="Ochiai H."/>
            <person name="Inoue Y."/>
            <person name="Takeya M."/>
            <person name="Sasaki A."/>
            <person name="Kaku H."/>
        </authorList>
    </citation>
    <scope>NUCLEOTIDE SEQUENCE [LARGE SCALE GENOMIC DNA]</scope>
    <source>
        <strain>MAFF 311018</strain>
    </source>
</reference>
<dbReference type="EC" id="3.2.2.27" evidence="1"/>
<dbReference type="EMBL" id="AP008229">
    <property type="protein sequence ID" value="BAE70806.1"/>
    <property type="molecule type" value="Genomic_DNA"/>
</dbReference>
<dbReference type="RefSeq" id="WP_011260610.1">
    <property type="nucleotide sequence ID" value="NC_007705.1"/>
</dbReference>
<dbReference type="SMR" id="Q2NY21"/>
<dbReference type="KEGG" id="xom:XOO4051"/>
<dbReference type="HOGENOM" id="CLU_032162_3_1_6"/>
<dbReference type="GO" id="GO:0005737">
    <property type="term" value="C:cytoplasm"/>
    <property type="evidence" value="ECO:0007669"/>
    <property type="project" value="UniProtKB-SubCell"/>
</dbReference>
<dbReference type="GO" id="GO:0004844">
    <property type="term" value="F:uracil DNA N-glycosylase activity"/>
    <property type="evidence" value="ECO:0007669"/>
    <property type="project" value="UniProtKB-UniRule"/>
</dbReference>
<dbReference type="GO" id="GO:0097510">
    <property type="term" value="P:base-excision repair, AP site formation via deaminated base removal"/>
    <property type="evidence" value="ECO:0007669"/>
    <property type="project" value="TreeGrafter"/>
</dbReference>
<dbReference type="CDD" id="cd10027">
    <property type="entry name" value="UDG-F1-like"/>
    <property type="match status" value="1"/>
</dbReference>
<dbReference type="FunFam" id="3.40.470.10:FF:000001">
    <property type="entry name" value="Uracil-DNA glycosylase"/>
    <property type="match status" value="1"/>
</dbReference>
<dbReference type="Gene3D" id="3.40.470.10">
    <property type="entry name" value="Uracil-DNA glycosylase-like domain"/>
    <property type="match status" value="1"/>
</dbReference>
<dbReference type="HAMAP" id="MF_00148">
    <property type="entry name" value="UDG"/>
    <property type="match status" value="1"/>
</dbReference>
<dbReference type="InterPro" id="IPR002043">
    <property type="entry name" value="UDG_fam1"/>
</dbReference>
<dbReference type="InterPro" id="IPR018085">
    <property type="entry name" value="Ura-DNA_Glyclase_AS"/>
</dbReference>
<dbReference type="InterPro" id="IPR005122">
    <property type="entry name" value="Uracil-DNA_glycosylase-like"/>
</dbReference>
<dbReference type="InterPro" id="IPR036895">
    <property type="entry name" value="Uracil-DNA_glycosylase-like_sf"/>
</dbReference>
<dbReference type="NCBIfam" id="NF003588">
    <property type="entry name" value="PRK05254.1-1"/>
    <property type="match status" value="1"/>
</dbReference>
<dbReference type="NCBIfam" id="NF003589">
    <property type="entry name" value="PRK05254.1-2"/>
    <property type="match status" value="1"/>
</dbReference>
<dbReference type="NCBIfam" id="NF003591">
    <property type="entry name" value="PRK05254.1-4"/>
    <property type="match status" value="1"/>
</dbReference>
<dbReference type="NCBIfam" id="NF003592">
    <property type="entry name" value="PRK05254.1-5"/>
    <property type="match status" value="1"/>
</dbReference>
<dbReference type="NCBIfam" id="TIGR00628">
    <property type="entry name" value="ung"/>
    <property type="match status" value="1"/>
</dbReference>
<dbReference type="PANTHER" id="PTHR11264">
    <property type="entry name" value="URACIL-DNA GLYCOSYLASE"/>
    <property type="match status" value="1"/>
</dbReference>
<dbReference type="PANTHER" id="PTHR11264:SF0">
    <property type="entry name" value="URACIL-DNA GLYCOSYLASE"/>
    <property type="match status" value="1"/>
</dbReference>
<dbReference type="Pfam" id="PF03167">
    <property type="entry name" value="UDG"/>
    <property type="match status" value="1"/>
</dbReference>
<dbReference type="SMART" id="SM00986">
    <property type="entry name" value="UDG"/>
    <property type="match status" value="1"/>
</dbReference>
<dbReference type="SMART" id="SM00987">
    <property type="entry name" value="UreE_C"/>
    <property type="match status" value="1"/>
</dbReference>
<dbReference type="SUPFAM" id="SSF52141">
    <property type="entry name" value="Uracil-DNA glycosylase-like"/>
    <property type="match status" value="1"/>
</dbReference>
<dbReference type="PROSITE" id="PS00130">
    <property type="entry name" value="U_DNA_GLYCOSYLASE"/>
    <property type="match status" value="1"/>
</dbReference>
<organism>
    <name type="scientific">Xanthomonas oryzae pv. oryzae (strain MAFF 311018)</name>
    <dbReference type="NCBI Taxonomy" id="342109"/>
    <lineage>
        <taxon>Bacteria</taxon>
        <taxon>Pseudomonadati</taxon>
        <taxon>Pseudomonadota</taxon>
        <taxon>Gammaproteobacteria</taxon>
        <taxon>Lysobacterales</taxon>
        <taxon>Lysobacteraceae</taxon>
        <taxon>Xanthomonas</taxon>
    </lineage>
</organism>
<comment type="function">
    <text evidence="1">Excises uracil residues from the DNA which can arise as a result of misincorporation of dUMP residues by DNA polymerase or due to deamination of cytosine.</text>
</comment>
<comment type="catalytic activity">
    <reaction evidence="1">
        <text>Hydrolyzes single-stranded DNA or mismatched double-stranded DNA and polynucleotides, releasing free uracil.</text>
        <dbReference type="EC" id="3.2.2.27"/>
    </reaction>
</comment>
<comment type="subcellular location">
    <subcellularLocation>
        <location evidence="1">Cytoplasm</location>
    </subcellularLocation>
</comment>
<comment type="similarity">
    <text evidence="1">Belongs to the uracil-DNA glycosylase (UDG) superfamily. UNG family.</text>
</comment>
<keyword id="KW-0963">Cytoplasm</keyword>
<keyword id="KW-0227">DNA damage</keyword>
<keyword id="KW-0234">DNA repair</keyword>
<keyword id="KW-0378">Hydrolase</keyword>
<feature type="chain" id="PRO_1000009964" description="Uracil-DNA glycosylase">
    <location>
        <begin position="1"/>
        <end position="241"/>
    </location>
</feature>
<feature type="region of interest" description="Disordered" evidence="2">
    <location>
        <begin position="221"/>
        <end position="241"/>
    </location>
</feature>
<feature type="active site" description="Proton acceptor" evidence="1">
    <location>
        <position position="71"/>
    </location>
</feature>
<proteinExistence type="inferred from homology"/>
<evidence type="ECO:0000255" key="1">
    <source>
        <dbReference type="HAMAP-Rule" id="MF_00148"/>
    </source>
</evidence>
<evidence type="ECO:0000256" key="2">
    <source>
        <dbReference type="SAM" id="MobiDB-lite"/>
    </source>
</evidence>
<protein>
    <recommendedName>
        <fullName evidence="1">Uracil-DNA glycosylase</fullName>
        <shortName evidence="1">UDG</shortName>
        <ecNumber evidence="1">3.2.2.27</ecNumber>
    </recommendedName>
</protein>
<name>UNG_XANOM</name>
<gene>
    <name evidence="1" type="primary">ung</name>
    <name type="ordered locus">XOO4051</name>
</gene>
<sequence length="241" mass="26753">MTEVEARIQLEPSWKAKVGDWLLCSQMQELSAFLRQRKAVGARVFPPGPQIFAAFDATPFDQVKVVILGQDPYHGEGQAHGLCFSVLPGVPVPPSLLNIYKEIQDDLGIARPDHGYLMPWARQGVLLLNAVLTVEQGRAGAHQNKGWEGFTDHVVETLNREREGLVFLLWGSYAQSKGRVIDQARHRVFKAPHPSPLSAHRGFLGCQHFSKTNAHLQRRGISPIDWSLPPRNELDTTSAGA</sequence>